<feature type="chain" id="PRO_0000410369" description="High osmolarity signaling protein SHO1">
    <location>
        <begin position="1"/>
        <end position="299"/>
    </location>
</feature>
<feature type="topological domain" description="Cytoplasmic" evidence="2">
    <location>
        <begin position="1"/>
        <end position="12"/>
    </location>
</feature>
<feature type="transmembrane region" description="Helical" evidence="2">
    <location>
        <begin position="13"/>
        <end position="33"/>
    </location>
</feature>
<feature type="topological domain" description="Extracellular" evidence="2">
    <location>
        <begin position="34"/>
        <end position="42"/>
    </location>
</feature>
<feature type="transmembrane region" description="Helical" evidence="2">
    <location>
        <begin position="43"/>
        <end position="63"/>
    </location>
</feature>
<feature type="topological domain" description="Cytoplasmic" evidence="2">
    <location>
        <begin position="64"/>
        <end position="65"/>
    </location>
</feature>
<feature type="transmembrane region" description="Helical" evidence="2">
    <location>
        <begin position="66"/>
        <end position="86"/>
    </location>
</feature>
<feature type="topological domain" description="Extracellular" evidence="2">
    <location>
        <begin position="87"/>
        <end position="100"/>
    </location>
</feature>
<feature type="transmembrane region" description="Helical" evidence="2">
    <location>
        <begin position="101"/>
        <end position="121"/>
    </location>
</feature>
<feature type="topological domain" description="Cytoplasmic" evidence="2">
    <location>
        <begin position="122"/>
        <end position="299"/>
    </location>
</feature>
<feature type="domain" description="SH3" evidence="3">
    <location>
        <begin position="239"/>
        <end position="299"/>
    </location>
</feature>
<feature type="region of interest" description="Disordered" evidence="4">
    <location>
        <begin position="153"/>
        <end position="182"/>
    </location>
</feature>
<protein>
    <recommendedName>
        <fullName>High osmolarity signaling protein SHO1</fullName>
    </recommendedName>
    <alternativeName>
        <fullName>Osmosensor SHO1</fullName>
    </alternativeName>
</protein>
<gene>
    <name type="primary">SHO1</name>
    <name type="ORF">CLUG_02043</name>
</gene>
<sequence length="299" mass="32749">MGFRMANFLGDPFAISTVSFGVIAWIVAIAGAGSSASDNFPRFTWWGLVYEILLIIMVFLLYLNNTIELYKFTLVGLLSVGFLYTTNSTNNLIYSSNSGNLCCAAGCILLSMLNFLWIVYFGGHPESPSNQFIDSFAMKSSYAQQLPSEKNDDHEFAVPRSASGSQGFGVSDSRHSQLTNSKSGYMSSSQLNGLENFSHTNVQNTGTVGASNPASMPNTVYNTNGTNTADSNFAVPVSTFRYKARALYSYDASPDDINEISFVKDEILEVDDIDGKWWQARRANGQVGICPSNYVKLLD</sequence>
<organism>
    <name type="scientific">Clavispora lusitaniae (strain ATCC 42720)</name>
    <name type="common">Yeast</name>
    <name type="synonym">Candida lusitaniae</name>
    <dbReference type="NCBI Taxonomy" id="306902"/>
    <lineage>
        <taxon>Eukaryota</taxon>
        <taxon>Fungi</taxon>
        <taxon>Dikarya</taxon>
        <taxon>Ascomycota</taxon>
        <taxon>Saccharomycotina</taxon>
        <taxon>Pichiomycetes</taxon>
        <taxon>Metschnikowiaceae</taxon>
        <taxon>Clavispora</taxon>
    </lineage>
</organism>
<evidence type="ECO:0000250" key="1"/>
<evidence type="ECO:0000255" key="2"/>
<evidence type="ECO:0000255" key="3">
    <source>
        <dbReference type="PROSITE-ProRule" id="PRU00192"/>
    </source>
</evidence>
<evidence type="ECO:0000256" key="4">
    <source>
        <dbReference type="SAM" id="MobiDB-lite"/>
    </source>
</evidence>
<evidence type="ECO:0000305" key="5"/>
<keyword id="KW-1003">Cell membrane</keyword>
<keyword id="KW-0472">Membrane</keyword>
<keyword id="KW-1185">Reference proteome</keyword>
<keyword id="KW-0728">SH3 domain</keyword>
<keyword id="KW-0346">Stress response</keyword>
<keyword id="KW-0812">Transmembrane</keyword>
<keyword id="KW-1133">Transmembrane helix</keyword>
<comment type="function">
    <text evidence="1">Plasma membrane osmosensor that activates the high osmolarity glycerol (HOG) MAPK signaling pathway in response to high osmolarity.</text>
</comment>
<comment type="subunit">
    <text evidence="1">Forms homooligomers.</text>
</comment>
<comment type="subcellular location">
    <subcellularLocation>
        <location evidence="1">Cell membrane</location>
        <topology evidence="1">Multi-pass membrane protein</topology>
    </subcellularLocation>
</comment>
<comment type="similarity">
    <text evidence="5">Belongs to the SHO1 family.</text>
</comment>
<reference key="1">
    <citation type="journal article" date="2009" name="Nature">
        <title>Evolution of pathogenicity and sexual reproduction in eight Candida genomes.</title>
        <authorList>
            <person name="Butler G."/>
            <person name="Rasmussen M.D."/>
            <person name="Lin M.F."/>
            <person name="Santos M.A.S."/>
            <person name="Sakthikumar S."/>
            <person name="Munro C.A."/>
            <person name="Rheinbay E."/>
            <person name="Grabherr M."/>
            <person name="Forche A."/>
            <person name="Reedy J.L."/>
            <person name="Agrafioti I."/>
            <person name="Arnaud M.B."/>
            <person name="Bates S."/>
            <person name="Brown A.J.P."/>
            <person name="Brunke S."/>
            <person name="Costanzo M.C."/>
            <person name="Fitzpatrick D.A."/>
            <person name="de Groot P.W.J."/>
            <person name="Harris D."/>
            <person name="Hoyer L.L."/>
            <person name="Hube B."/>
            <person name="Klis F.M."/>
            <person name="Kodira C."/>
            <person name="Lennard N."/>
            <person name="Logue M.E."/>
            <person name="Martin R."/>
            <person name="Neiman A.M."/>
            <person name="Nikolaou E."/>
            <person name="Quail M.A."/>
            <person name="Quinn J."/>
            <person name="Santos M.C."/>
            <person name="Schmitzberger F.F."/>
            <person name="Sherlock G."/>
            <person name="Shah P."/>
            <person name="Silverstein K.A.T."/>
            <person name="Skrzypek M.S."/>
            <person name="Soll D."/>
            <person name="Staggs R."/>
            <person name="Stansfield I."/>
            <person name="Stumpf M.P.H."/>
            <person name="Sudbery P.E."/>
            <person name="Srikantha T."/>
            <person name="Zeng Q."/>
            <person name="Berman J."/>
            <person name="Berriman M."/>
            <person name="Heitman J."/>
            <person name="Gow N.A.R."/>
            <person name="Lorenz M.C."/>
            <person name="Birren B.W."/>
            <person name="Kellis M."/>
            <person name="Cuomo C.A."/>
        </authorList>
    </citation>
    <scope>NUCLEOTIDE SEQUENCE [LARGE SCALE GENOMIC DNA]</scope>
    <source>
        <strain>ATCC 42720</strain>
    </source>
</reference>
<proteinExistence type="inferred from homology"/>
<accession>C4Y1G1</accession>
<dbReference type="EMBL" id="CH408077">
    <property type="protein sequence ID" value="EEQ37920.1"/>
    <property type="molecule type" value="Genomic_DNA"/>
</dbReference>
<dbReference type="RefSeq" id="XP_002618584.1">
    <property type="nucleotide sequence ID" value="XM_002618538.1"/>
</dbReference>
<dbReference type="SMR" id="C4Y1G1"/>
<dbReference type="FunCoup" id="C4Y1G1">
    <property type="interactions" value="163"/>
</dbReference>
<dbReference type="STRING" id="306902.C4Y1G1"/>
<dbReference type="GeneID" id="8498877"/>
<dbReference type="KEGG" id="clu:CLUG_02043"/>
<dbReference type="VEuPathDB" id="FungiDB:CLUG_02043"/>
<dbReference type="HOGENOM" id="CLU_043316_1_0_1"/>
<dbReference type="InParanoid" id="C4Y1G1"/>
<dbReference type="OMA" id="NIVWIFY"/>
<dbReference type="OrthoDB" id="117039at4891"/>
<dbReference type="Proteomes" id="UP000007703">
    <property type="component" value="Unassembled WGS sequence"/>
</dbReference>
<dbReference type="GO" id="GO:0005886">
    <property type="term" value="C:plasma membrane"/>
    <property type="evidence" value="ECO:0007669"/>
    <property type="project" value="UniProtKB-SubCell"/>
</dbReference>
<dbReference type="GO" id="GO:0030833">
    <property type="term" value="P:regulation of actin filament polymerization"/>
    <property type="evidence" value="ECO:0007669"/>
    <property type="project" value="TreeGrafter"/>
</dbReference>
<dbReference type="CDD" id="cd11855">
    <property type="entry name" value="SH3_Sho1p"/>
    <property type="match status" value="1"/>
</dbReference>
<dbReference type="FunFam" id="2.30.30.40:FF:000213">
    <property type="entry name" value="High osmolarity signaling protein SHO1"/>
    <property type="match status" value="1"/>
</dbReference>
<dbReference type="Gene3D" id="2.30.30.40">
    <property type="entry name" value="SH3 Domains"/>
    <property type="match status" value="1"/>
</dbReference>
<dbReference type="InterPro" id="IPR036028">
    <property type="entry name" value="SH3-like_dom_sf"/>
</dbReference>
<dbReference type="InterPro" id="IPR001452">
    <property type="entry name" value="SH3_domain"/>
</dbReference>
<dbReference type="InterPro" id="IPR035522">
    <property type="entry name" value="Sho1_SH3"/>
</dbReference>
<dbReference type="PANTHER" id="PTHR15735">
    <property type="entry name" value="FCH AND DOUBLE SH3 DOMAINS PROTEIN"/>
    <property type="match status" value="1"/>
</dbReference>
<dbReference type="PANTHER" id="PTHR15735:SF20">
    <property type="entry name" value="HIGH OSMOLARITY SIGNALING PROTEIN SHO1"/>
    <property type="match status" value="1"/>
</dbReference>
<dbReference type="Pfam" id="PF14604">
    <property type="entry name" value="SH3_9"/>
    <property type="match status" value="1"/>
</dbReference>
<dbReference type="PRINTS" id="PR00452">
    <property type="entry name" value="SH3DOMAIN"/>
</dbReference>
<dbReference type="SMART" id="SM00326">
    <property type="entry name" value="SH3"/>
    <property type="match status" value="1"/>
</dbReference>
<dbReference type="SUPFAM" id="SSF50044">
    <property type="entry name" value="SH3-domain"/>
    <property type="match status" value="1"/>
</dbReference>
<dbReference type="PROSITE" id="PS50002">
    <property type="entry name" value="SH3"/>
    <property type="match status" value="1"/>
</dbReference>
<name>SHO1_CLAL4</name>